<evidence type="ECO:0000255" key="1">
    <source>
        <dbReference type="HAMAP-Rule" id="MF_01368"/>
    </source>
</evidence>
<evidence type="ECO:0000305" key="2"/>
<feature type="chain" id="PRO_1000144503" description="Large ribosomal subunit protein bL17">
    <location>
        <begin position="1"/>
        <end position="119"/>
    </location>
</feature>
<keyword id="KW-0687">Ribonucleoprotein</keyword>
<keyword id="KW-0689">Ribosomal protein</keyword>
<accession>B5ZB67</accession>
<dbReference type="EMBL" id="CP001184">
    <property type="protein sequence ID" value="ACI59957.1"/>
    <property type="molecule type" value="Genomic_DNA"/>
</dbReference>
<dbReference type="RefSeq" id="WP_004026179.1">
    <property type="nucleotide sequence ID" value="NC_011374.1"/>
</dbReference>
<dbReference type="SMR" id="B5ZB67"/>
<dbReference type="STRING" id="565575.UUR10_0253"/>
<dbReference type="GeneID" id="93848733"/>
<dbReference type="KEGG" id="uue:UUR10_0253"/>
<dbReference type="eggNOG" id="COG0203">
    <property type="taxonomic scope" value="Bacteria"/>
</dbReference>
<dbReference type="HOGENOM" id="CLU_074407_2_2_14"/>
<dbReference type="OrthoDB" id="9809073at2"/>
<dbReference type="Proteomes" id="UP000002018">
    <property type="component" value="Chromosome"/>
</dbReference>
<dbReference type="GO" id="GO:0022625">
    <property type="term" value="C:cytosolic large ribosomal subunit"/>
    <property type="evidence" value="ECO:0007669"/>
    <property type="project" value="TreeGrafter"/>
</dbReference>
<dbReference type="GO" id="GO:0003735">
    <property type="term" value="F:structural constituent of ribosome"/>
    <property type="evidence" value="ECO:0007669"/>
    <property type="project" value="InterPro"/>
</dbReference>
<dbReference type="GO" id="GO:0006412">
    <property type="term" value="P:translation"/>
    <property type="evidence" value="ECO:0007669"/>
    <property type="project" value="UniProtKB-UniRule"/>
</dbReference>
<dbReference type="Gene3D" id="3.90.1030.10">
    <property type="entry name" value="Ribosomal protein L17"/>
    <property type="match status" value="1"/>
</dbReference>
<dbReference type="HAMAP" id="MF_01368">
    <property type="entry name" value="Ribosomal_bL17"/>
    <property type="match status" value="1"/>
</dbReference>
<dbReference type="InterPro" id="IPR000456">
    <property type="entry name" value="Ribosomal_bL17"/>
</dbReference>
<dbReference type="InterPro" id="IPR047859">
    <property type="entry name" value="Ribosomal_bL17_CS"/>
</dbReference>
<dbReference type="InterPro" id="IPR036373">
    <property type="entry name" value="Ribosomal_bL17_sf"/>
</dbReference>
<dbReference type="NCBIfam" id="TIGR00059">
    <property type="entry name" value="L17"/>
    <property type="match status" value="1"/>
</dbReference>
<dbReference type="PANTHER" id="PTHR14413:SF16">
    <property type="entry name" value="LARGE RIBOSOMAL SUBUNIT PROTEIN BL17M"/>
    <property type="match status" value="1"/>
</dbReference>
<dbReference type="PANTHER" id="PTHR14413">
    <property type="entry name" value="RIBOSOMAL PROTEIN L17"/>
    <property type="match status" value="1"/>
</dbReference>
<dbReference type="Pfam" id="PF01196">
    <property type="entry name" value="Ribosomal_L17"/>
    <property type="match status" value="1"/>
</dbReference>
<dbReference type="SUPFAM" id="SSF64263">
    <property type="entry name" value="Prokaryotic ribosomal protein L17"/>
    <property type="match status" value="1"/>
</dbReference>
<dbReference type="PROSITE" id="PS01167">
    <property type="entry name" value="RIBOSOMAL_L17"/>
    <property type="match status" value="1"/>
</dbReference>
<name>RL17_UREU1</name>
<protein>
    <recommendedName>
        <fullName evidence="1">Large ribosomal subunit protein bL17</fullName>
    </recommendedName>
    <alternativeName>
        <fullName evidence="2">50S ribosomal protein L17</fullName>
    </alternativeName>
</protein>
<reference key="1">
    <citation type="submission" date="2008-10" db="EMBL/GenBank/DDBJ databases">
        <title>Genome sequence of Ureaplasma urealyticum serovar 10 ATCC-33699.</title>
        <authorList>
            <person name="Shrivastava S."/>
            <person name="Methe B.A."/>
            <person name="Glass J."/>
            <person name="White K."/>
            <person name="Duffy L.B."/>
        </authorList>
    </citation>
    <scope>NUCLEOTIDE SEQUENCE [LARGE SCALE GENOMIC DNA]</scope>
    <source>
        <strain>ATCC 33699 / Western</strain>
    </source>
</reference>
<gene>
    <name evidence="1" type="primary">rplQ</name>
    <name type="ordered locus">UUR10_0253</name>
</gene>
<proteinExistence type="inferred from homology"/>
<comment type="subunit">
    <text evidence="1">Part of the 50S ribosomal subunit. Contacts protein L32.</text>
</comment>
<comment type="similarity">
    <text evidence="1">Belongs to the bacterial ribosomal protein bL17 family.</text>
</comment>
<sequence length="119" mass="13192">MSYINKPGKTRAWRKMVSRQQVSDVISHGSIVTTKTKAKESQRHVDHLITLAKKNTLASRRAAAAILLGTNQHSADDLLRKLFNELGPKYANRAGGYTRVIKLGNRPGDNTEEAVLQLV</sequence>
<organism>
    <name type="scientific">Ureaplasma urealyticum serovar 10 (strain ATCC 33699 / Western)</name>
    <dbReference type="NCBI Taxonomy" id="565575"/>
    <lineage>
        <taxon>Bacteria</taxon>
        <taxon>Bacillati</taxon>
        <taxon>Mycoplasmatota</taxon>
        <taxon>Mycoplasmoidales</taxon>
        <taxon>Mycoplasmoidaceae</taxon>
        <taxon>Ureaplasma</taxon>
    </lineage>
</organism>